<sequence>MSKIVKIIGREIIDSRGNPTVEAEVHLEGGFVGMAAAPSGASTGSREALELRDGDKSRFLGKGVTKAVAAVNGPIAQALIGKDAKDQAGIDKIMIDLDGTENKSKFGANAILAVSLANAKAAAAAKGMPLYEHIAELNGTPGKYSMPVPMMNIINGGEHADNNVDIQEFMIQPVGAKTVKEAIRMGSEVFHHLAKVLKAKGMNTAVGDEGGYAPNLGSNAEALAVIAEAVKAAGYELGKDITLAMDCAASEFYKDGKYVLAGEGNKAFTSEEFTHFLEELTKQYPIVSIEDGLDESDWDGFAYQTKVLGDKIQLVGDDLFVTNTKILKEGIEKGIANSILIKFNQIGSLTETLAAIKMAKDAGYTAVISHRSGETEDATIADLAVGTAAGQIKTGSMSRSDRVAKYNQLIRIEEALGEKAPYNGRKEIKGQA</sequence>
<gene>
    <name evidence="2" type="primary">eno</name>
    <name type="ordered locus">SBO_2660</name>
</gene>
<keyword id="KW-0963">Cytoplasm</keyword>
<keyword id="KW-0324">Glycolysis</keyword>
<keyword id="KW-0456">Lyase</keyword>
<keyword id="KW-0460">Magnesium</keyword>
<keyword id="KW-0479">Metal-binding</keyword>
<keyword id="KW-0964">Secreted</keyword>
<feature type="initiator methionine" description="Removed" evidence="1">
    <location>
        <position position="1"/>
    </location>
</feature>
<feature type="chain" id="PRO_0000267104" description="Enolase">
    <location>
        <begin position="2"/>
        <end position="432"/>
    </location>
</feature>
<feature type="active site" description="Proton donor" evidence="2">
    <location>
        <position position="209"/>
    </location>
</feature>
<feature type="active site" description="Proton acceptor" evidence="2">
    <location>
        <position position="342"/>
    </location>
</feature>
<feature type="binding site" evidence="2">
    <location>
        <position position="167"/>
    </location>
    <ligand>
        <name>(2R)-2-phosphoglycerate</name>
        <dbReference type="ChEBI" id="CHEBI:58289"/>
    </ligand>
</feature>
<feature type="binding site" evidence="2">
    <location>
        <position position="246"/>
    </location>
    <ligand>
        <name>Mg(2+)</name>
        <dbReference type="ChEBI" id="CHEBI:18420"/>
    </ligand>
</feature>
<feature type="binding site" evidence="2">
    <location>
        <position position="290"/>
    </location>
    <ligand>
        <name>Mg(2+)</name>
        <dbReference type="ChEBI" id="CHEBI:18420"/>
    </ligand>
</feature>
<feature type="binding site" evidence="2">
    <location>
        <position position="317"/>
    </location>
    <ligand>
        <name>Mg(2+)</name>
        <dbReference type="ChEBI" id="CHEBI:18420"/>
    </ligand>
</feature>
<feature type="binding site" evidence="2">
    <location>
        <position position="342"/>
    </location>
    <ligand>
        <name>(2R)-2-phosphoglycerate</name>
        <dbReference type="ChEBI" id="CHEBI:58289"/>
    </ligand>
</feature>
<feature type="binding site" evidence="2">
    <location>
        <position position="371"/>
    </location>
    <ligand>
        <name>(2R)-2-phosphoglycerate</name>
        <dbReference type="ChEBI" id="CHEBI:58289"/>
    </ligand>
</feature>
<feature type="binding site" evidence="2">
    <location>
        <position position="372"/>
    </location>
    <ligand>
        <name>(2R)-2-phosphoglycerate</name>
        <dbReference type="ChEBI" id="CHEBI:58289"/>
    </ligand>
</feature>
<feature type="binding site" evidence="2">
    <location>
        <position position="393"/>
    </location>
    <ligand>
        <name>(2R)-2-phosphoglycerate</name>
        <dbReference type="ChEBI" id="CHEBI:58289"/>
    </ligand>
</feature>
<evidence type="ECO:0000250" key="1"/>
<evidence type="ECO:0000255" key="2">
    <source>
        <dbReference type="HAMAP-Rule" id="MF_00318"/>
    </source>
</evidence>
<reference key="1">
    <citation type="journal article" date="2005" name="Nucleic Acids Res.">
        <title>Genome dynamics and diversity of Shigella species, the etiologic agents of bacillary dysentery.</title>
        <authorList>
            <person name="Yang F."/>
            <person name="Yang J."/>
            <person name="Zhang X."/>
            <person name="Chen L."/>
            <person name="Jiang Y."/>
            <person name="Yan Y."/>
            <person name="Tang X."/>
            <person name="Wang J."/>
            <person name="Xiong Z."/>
            <person name="Dong J."/>
            <person name="Xue Y."/>
            <person name="Zhu Y."/>
            <person name="Xu X."/>
            <person name="Sun L."/>
            <person name="Chen S."/>
            <person name="Nie H."/>
            <person name="Peng J."/>
            <person name="Xu J."/>
            <person name="Wang Y."/>
            <person name="Yuan Z."/>
            <person name="Wen Y."/>
            <person name="Yao Z."/>
            <person name="Shen Y."/>
            <person name="Qiang B."/>
            <person name="Hou Y."/>
            <person name="Yu J."/>
            <person name="Jin Q."/>
        </authorList>
    </citation>
    <scope>NUCLEOTIDE SEQUENCE [LARGE SCALE GENOMIC DNA]</scope>
    <source>
        <strain>Sb227</strain>
    </source>
</reference>
<protein>
    <recommendedName>
        <fullName evidence="2">Enolase</fullName>
        <ecNumber evidence="2">4.2.1.11</ecNumber>
    </recommendedName>
    <alternativeName>
        <fullName evidence="2">2-phospho-D-glycerate hydro-lyase</fullName>
    </alternativeName>
    <alternativeName>
        <fullName evidence="2">2-phosphoglycerate dehydratase</fullName>
    </alternativeName>
</protein>
<organism>
    <name type="scientific">Shigella boydii serotype 4 (strain Sb227)</name>
    <dbReference type="NCBI Taxonomy" id="300268"/>
    <lineage>
        <taxon>Bacteria</taxon>
        <taxon>Pseudomonadati</taxon>
        <taxon>Pseudomonadota</taxon>
        <taxon>Gammaproteobacteria</taxon>
        <taxon>Enterobacterales</taxon>
        <taxon>Enterobacteriaceae</taxon>
        <taxon>Shigella</taxon>
    </lineage>
</organism>
<comment type="function">
    <text evidence="2">Catalyzes the reversible conversion of 2-phosphoglycerate (2-PG) into phosphoenolpyruvate (PEP). It is essential for the degradation of carbohydrates via glycolysis.</text>
</comment>
<comment type="catalytic activity">
    <reaction evidence="2">
        <text>(2R)-2-phosphoglycerate = phosphoenolpyruvate + H2O</text>
        <dbReference type="Rhea" id="RHEA:10164"/>
        <dbReference type="ChEBI" id="CHEBI:15377"/>
        <dbReference type="ChEBI" id="CHEBI:58289"/>
        <dbReference type="ChEBI" id="CHEBI:58702"/>
        <dbReference type="EC" id="4.2.1.11"/>
    </reaction>
</comment>
<comment type="cofactor">
    <cofactor evidence="2">
        <name>Mg(2+)</name>
        <dbReference type="ChEBI" id="CHEBI:18420"/>
    </cofactor>
    <text evidence="2">Binds a second Mg(2+) ion via substrate during catalysis.</text>
</comment>
<comment type="pathway">
    <text evidence="2">Carbohydrate degradation; glycolysis; pyruvate from D-glyceraldehyde 3-phosphate: step 4/5.</text>
</comment>
<comment type="subunit">
    <text evidence="2">Component of the RNA degradosome, a multiprotein complex involved in RNA processing and mRNA degradation.</text>
</comment>
<comment type="subcellular location">
    <subcellularLocation>
        <location evidence="2">Cytoplasm</location>
    </subcellularLocation>
    <subcellularLocation>
        <location evidence="2">Secreted</location>
    </subcellularLocation>
    <subcellularLocation>
        <location evidence="2">Cell surface</location>
    </subcellularLocation>
    <text evidence="2">Fractions of enolase are present in both the cytoplasm and on the cell surface.</text>
</comment>
<comment type="similarity">
    <text evidence="2">Belongs to the enolase family.</text>
</comment>
<accession>Q31XL1</accession>
<dbReference type="EC" id="4.2.1.11" evidence="2"/>
<dbReference type="EMBL" id="CP000036">
    <property type="protein sequence ID" value="ABB67197.1"/>
    <property type="molecule type" value="Genomic_DNA"/>
</dbReference>
<dbReference type="RefSeq" id="WP_000036723.1">
    <property type="nucleotide sequence ID" value="NC_007613.1"/>
</dbReference>
<dbReference type="SMR" id="Q31XL1"/>
<dbReference type="GeneID" id="93779219"/>
<dbReference type="KEGG" id="sbo:SBO_2660"/>
<dbReference type="HOGENOM" id="CLU_031223_2_1_6"/>
<dbReference type="UniPathway" id="UPA00109">
    <property type="reaction ID" value="UER00187"/>
</dbReference>
<dbReference type="Proteomes" id="UP000007067">
    <property type="component" value="Chromosome"/>
</dbReference>
<dbReference type="GO" id="GO:0009986">
    <property type="term" value="C:cell surface"/>
    <property type="evidence" value="ECO:0007669"/>
    <property type="project" value="UniProtKB-SubCell"/>
</dbReference>
<dbReference type="GO" id="GO:0005576">
    <property type="term" value="C:extracellular region"/>
    <property type="evidence" value="ECO:0007669"/>
    <property type="project" value="UniProtKB-SubCell"/>
</dbReference>
<dbReference type="GO" id="GO:0000015">
    <property type="term" value="C:phosphopyruvate hydratase complex"/>
    <property type="evidence" value="ECO:0007669"/>
    <property type="project" value="InterPro"/>
</dbReference>
<dbReference type="GO" id="GO:0000287">
    <property type="term" value="F:magnesium ion binding"/>
    <property type="evidence" value="ECO:0007669"/>
    <property type="project" value="UniProtKB-UniRule"/>
</dbReference>
<dbReference type="GO" id="GO:0004634">
    <property type="term" value="F:phosphopyruvate hydratase activity"/>
    <property type="evidence" value="ECO:0007669"/>
    <property type="project" value="UniProtKB-UniRule"/>
</dbReference>
<dbReference type="GO" id="GO:0006096">
    <property type="term" value="P:glycolytic process"/>
    <property type="evidence" value="ECO:0007669"/>
    <property type="project" value="UniProtKB-UniRule"/>
</dbReference>
<dbReference type="CDD" id="cd03313">
    <property type="entry name" value="enolase"/>
    <property type="match status" value="1"/>
</dbReference>
<dbReference type="FunFam" id="3.20.20.120:FF:000001">
    <property type="entry name" value="Enolase"/>
    <property type="match status" value="1"/>
</dbReference>
<dbReference type="FunFam" id="3.30.390.10:FF:000001">
    <property type="entry name" value="Enolase"/>
    <property type="match status" value="1"/>
</dbReference>
<dbReference type="Gene3D" id="3.20.20.120">
    <property type="entry name" value="Enolase-like C-terminal domain"/>
    <property type="match status" value="1"/>
</dbReference>
<dbReference type="Gene3D" id="3.30.390.10">
    <property type="entry name" value="Enolase-like, N-terminal domain"/>
    <property type="match status" value="1"/>
</dbReference>
<dbReference type="HAMAP" id="MF_00318">
    <property type="entry name" value="Enolase"/>
    <property type="match status" value="1"/>
</dbReference>
<dbReference type="InterPro" id="IPR000941">
    <property type="entry name" value="Enolase"/>
</dbReference>
<dbReference type="InterPro" id="IPR036849">
    <property type="entry name" value="Enolase-like_C_sf"/>
</dbReference>
<dbReference type="InterPro" id="IPR029017">
    <property type="entry name" value="Enolase-like_N"/>
</dbReference>
<dbReference type="InterPro" id="IPR020810">
    <property type="entry name" value="Enolase_C"/>
</dbReference>
<dbReference type="InterPro" id="IPR020809">
    <property type="entry name" value="Enolase_CS"/>
</dbReference>
<dbReference type="InterPro" id="IPR020811">
    <property type="entry name" value="Enolase_N"/>
</dbReference>
<dbReference type="NCBIfam" id="TIGR01060">
    <property type="entry name" value="eno"/>
    <property type="match status" value="1"/>
</dbReference>
<dbReference type="PANTHER" id="PTHR11902">
    <property type="entry name" value="ENOLASE"/>
    <property type="match status" value="1"/>
</dbReference>
<dbReference type="PANTHER" id="PTHR11902:SF1">
    <property type="entry name" value="ENOLASE"/>
    <property type="match status" value="1"/>
</dbReference>
<dbReference type="Pfam" id="PF00113">
    <property type="entry name" value="Enolase_C"/>
    <property type="match status" value="1"/>
</dbReference>
<dbReference type="Pfam" id="PF03952">
    <property type="entry name" value="Enolase_N"/>
    <property type="match status" value="1"/>
</dbReference>
<dbReference type="PIRSF" id="PIRSF001400">
    <property type="entry name" value="Enolase"/>
    <property type="match status" value="1"/>
</dbReference>
<dbReference type="PRINTS" id="PR00148">
    <property type="entry name" value="ENOLASE"/>
</dbReference>
<dbReference type="SFLD" id="SFLDS00001">
    <property type="entry name" value="Enolase"/>
    <property type="match status" value="1"/>
</dbReference>
<dbReference type="SFLD" id="SFLDF00002">
    <property type="entry name" value="enolase"/>
    <property type="match status" value="1"/>
</dbReference>
<dbReference type="SMART" id="SM01192">
    <property type="entry name" value="Enolase_C"/>
    <property type="match status" value="1"/>
</dbReference>
<dbReference type="SMART" id="SM01193">
    <property type="entry name" value="Enolase_N"/>
    <property type="match status" value="1"/>
</dbReference>
<dbReference type="SUPFAM" id="SSF51604">
    <property type="entry name" value="Enolase C-terminal domain-like"/>
    <property type="match status" value="1"/>
</dbReference>
<dbReference type="SUPFAM" id="SSF54826">
    <property type="entry name" value="Enolase N-terminal domain-like"/>
    <property type="match status" value="1"/>
</dbReference>
<dbReference type="PROSITE" id="PS00164">
    <property type="entry name" value="ENOLASE"/>
    <property type="match status" value="1"/>
</dbReference>
<proteinExistence type="inferred from homology"/>
<name>ENO_SHIBS</name>